<proteinExistence type="inferred from homology"/>
<name>RIBB_VIBVY</name>
<reference key="1">
    <citation type="journal article" date="2003" name="Genome Res.">
        <title>Comparative genome analysis of Vibrio vulnificus, a marine pathogen.</title>
        <authorList>
            <person name="Chen C.-Y."/>
            <person name="Wu K.-M."/>
            <person name="Chang Y.-C."/>
            <person name="Chang C.-H."/>
            <person name="Tsai H.-C."/>
            <person name="Liao T.-L."/>
            <person name="Liu Y.-M."/>
            <person name="Chen H.-J."/>
            <person name="Shen A.B.-T."/>
            <person name="Li J.-C."/>
            <person name="Su T.-L."/>
            <person name="Shao C.-P."/>
            <person name="Lee C.-T."/>
            <person name="Hor L.-I."/>
            <person name="Tsai S.-F."/>
        </authorList>
    </citation>
    <scope>NUCLEOTIDE SEQUENCE [LARGE SCALE GENOMIC DNA]</scope>
    <source>
        <strain>YJ016</strain>
    </source>
</reference>
<accession>Q7MFR0</accession>
<dbReference type="EC" id="4.1.99.12" evidence="1"/>
<dbReference type="EMBL" id="BA000038">
    <property type="protein sequence ID" value="BAC96286.1"/>
    <property type="molecule type" value="Genomic_DNA"/>
</dbReference>
<dbReference type="RefSeq" id="WP_011082301.1">
    <property type="nucleotide sequence ID" value="NC_005140.1"/>
</dbReference>
<dbReference type="SMR" id="Q7MFR0"/>
<dbReference type="STRING" id="672.VV93_v1c32470"/>
<dbReference type="KEGG" id="vvy:VVA0260"/>
<dbReference type="PATRIC" id="fig|196600.6.peg.3472"/>
<dbReference type="eggNOG" id="COG0108">
    <property type="taxonomic scope" value="Bacteria"/>
</dbReference>
<dbReference type="HOGENOM" id="CLU_020273_3_0_6"/>
<dbReference type="UniPathway" id="UPA00275">
    <property type="reaction ID" value="UER00399"/>
</dbReference>
<dbReference type="Proteomes" id="UP000002675">
    <property type="component" value="Chromosome II"/>
</dbReference>
<dbReference type="GO" id="GO:0005829">
    <property type="term" value="C:cytosol"/>
    <property type="evidence" value="ECO:0007669"/>
    <property type="project" value="TreeGrafter"/>
</dbReference>
<dbReference type="GO" id="GO:0008686">
    <property type="term" value="F:3,4-dihydroxy-2-butanone-4-phosphate synthase activity"/>
    <property type="evidence" value="ECO:0007669"/>
    <property type="project" value="UniProtKB-UniRule"/>
</dbReference>
<dbReference type="GO" id="GO:0000287">
    <property type="term" value="F:magnesium ion binding"/>
    <property type="evidence" value="ECO:0007669"/>
    <property type="project" value="UniProtKB-UniRule"/>
</dbReference>
<dbReference type="GO" id="GO:0030145">
    <property type="term" value="F:manganese ion binding"/>
    <property type="evidence" value="ECO:0007669"/>
    <property type="project" value="UniProtKB-UniRule"/>
</dbReference>
<dbReference type="GO" id="GO:0009231">
    <property type="term" value="P:riboflavin biosynthetic process"/>
    <property type="evidence" value="ECO:0007669"/>
    <property type="project" value="UniProtKB-UniRule"/>
</dbReference>
<dbReference type="FunFam" id="3.90.870.10:FF:000002">
    <property type="entry name" value="3,4-dihydroxy-2-butanone 4-phosphate synthase"/>
    <property type="match status" value="1"/>
</dbReference>
<dbReference type="Gene3D" id="3.90.870.10">
    <property type="entry name" value="DHBP synthase"/>
    <property type="match status" value="1"/>
</dbReference>
<dbReference type="HAMAP" id="MF_00180">
    <property type="entry name" value="RibB"/>
    <property type="match status" value="1"/>
</dbReference>
<dbReference type="InterPro" id="IPR017945">
    <property type="entry name" value="DHBP_synth_RibB-like_a/b_dom"/>
</dbReference>
<dbReference type="InterPro" id="IPR000422">
    <property type="entry name" value="DHBP_synthase_RibB"/>
</dbReference>
<dbReference type="NCBIfam" id="TIGR00506">
    <property type="entry name" value="ribB"/>
    <property type="match status" value="1"/>
</dbReference>
<dbReference type="PANTHER" id="PTHR21327:SF38">
    <property type="entry name" value="3,4-DIHYDROXY-2-BUTANONE 4-PHOSPHATE SYNTHASE"/>
    <property type="match status" value="1"/>
</dbReference>
<dbReference type="PANTHER" id="PTHR21327">
    <property type="entry name" value="GTP CYCLOHYDROLASE II-RELATED"/>
    <property type="match status" value="1"/>
</dbReference>
<dbReference type="Pfam" id="PF00926">
    <property type="entry name" value="DHBP_synthase"/>
    <property type="match status" value="1"/>
</dbReference>
<dbReference type="SUPFAM" id="SSF55821">
    <property type="entry name" value="YrdC/RibB"/>
    <property type="match status" value="1"/>
</dbReference>
<gene>
    <name evidence="1" type="primary">ribB</name>
    <name type="ordered locus">VVA0260</name>
</gene>
<keyword id="KW-0456">Lyase</keyword>
<keyword id="KW-0460">Magnesium</keyword>
<keyword id="KW-0464">Manganese</keyword>
<keyword id="KW-0479">Metal-binding</keyword>
<keyword id="KW-0686">Riboflavin biosynthesis</keyword>
<feature type="chain" id="PRO_0000151818" description="3,4-dihydroxy-2-butanone 4-phosphate synthase">
    <location>
        <begin position="1"/>
        <end position="218"/>
    </location>
</feature>
<feature type="binding site" evidence="1">
    <location>
        <begin position="38"/>
        <end position="39"/>
    </location>
    <ligand>
        <name>D-ribulose 5-phosphate</name>
        <dbReference type="ChEBI" id="CHEBI:58121"/>
    </ligand>
</feature>
<feature type="binding site" evidence="1">
    <location>
        <position position="39"/>
    </location>
    <ligand>
        <name>Mg(2+)</name>
        <dbReference type="ChEBI" id="CHEBI:18420"/>
        <label>1</label>
    </ligand>
</feature>
<feature type="binding site" evidence="1">
    <location>
        <position position="39"/>
    </location>
    <ligand>
        <name>Mg(2+)</name>
        <dbReference type="ChEBI" id="CHEBI:18420"/>
        <label>2</label>
    </ligand>
</feature>
<feature type="binding site" evidence="1">
    <location>
        <position position="43"/>
    </location>
    <ligand>
        <name>D-ribulose 5-phosphate</name>
        <dbReference type="ChEBI" id="CHEBI:58121"/>
    </ligand>
</feature>
<feature type="binding site" evidence="1">
    <location>
        <begin position="151"/>
        <end position="155"/>
    </location>
    <ligand>
        <name>D-ribulose 5-phosphate</name>
        <dbReference type="ChEBI" id="CHEBI:58121"/>
    </ligand>
</feature>
<feature type="binding site" evidence="1">
    <location>
        <position position="154"/>
    </location>
    <ligand>
        <name>Mg(2+)</name>
        <dbReference type="ChEBI" id="CHEBI:18420"/>
        <label>2</label>
    </ligand>
</feature>
<feature type="binding site" evidence="1">
    <location>
        <position position="175"/>
    </location>
    <ligand>
        <name>D-ribulose 5-phosphate</name>
        <dbReference type="ChEBI" id="CHEBI:58121"/>
    </ligand>
</feature>
<feature type="site" description="Essential for catalytic activity" evidence="1">
    <location>
        <position position="137"/>
    </location>
</feature>
<feature type="site" description="Essential for catalytic activity" evidence="1">
    <location>
        <position position="175"/>
    </location>
</feature>
<sequence>MNQSSLLAEFGDPITRVENALLALKEGRGVLLLDDEDRENEGDIIYSVEHLTNAQMALMIRECSGIVCLCLTDEHANKLELPPMVVNNNSANQTAFTVSIEAKQGVTTGVSAQDRVTTIKTAANPSAKADDLARPGHVFPLRARPGGVLARRGHTEGTVDLMQMAGLQPAGVLCELTNPDGTMAKTPEIIAFGKQHNMPVLTIEDMVMYRNQYDLKLA</sequence>
<organism>
    <name type="scientific">Vibrio vulnificus (strain YJ016)</name>
    <dbReference type="NCBI Taxonomy" id="196600"/>
    <lineage>
        <taxon>Bacteria</taxon>
        <taxon>Pseudomonadati</taxon>
        <taxon>Pseudomonadota</taxon>
        <taxon>Gammaproteobacteria</taxon>
        <taxon>Vibrionales</taxon>
        <taxon>Vibrionaceae</taxon>
        <taxon>Vibrio</taxon>
    </lineage>
</organism>
<comment type="function">
    <text evidence="1">Catalyzes the conversion of D-ribulose 5-phosphate to formate and 3,4-dihydroxy-2-butanone 4-phosphate.</text>
</comment>
<comment type="catalytic activity">
    <reaction evidence="1">
        <text>D-ribulose 5-phosphate = (2S)-2-hydroxy-3-oxobutyl phosphate + formate + H(+)</text>
        <dbReference type="Rhea" id="RHEA:18457"/>
        <dbReference type="ChEBI" id="CHEBI:15378"/>
        <dbReference type="ChEBI" id="CHEBI:15740"/>
        <dbReference type="ChEBI" id="CHEBI:58121"/>
        <dbReference type="ChEBI" id="CHEBI:58830"/>
        <dbReference type="EC" id="4.1.99.12"/>
    </reaction>
</comment>
<comment type="cofactor">
    <cofactor evidence="1">
        <name>Mg(2+)</name>
        <dbReference type="ChEBI" id="CHEBI:18420"/>
    </cofactor>
    <cofactor evidence="1">
        <name>Mn(2+)</name>
        <dbReference type="ChEBI" id="CHEBI:29035"/>
    </cofactor>
    <text evidence="1">Binds 2 divalent metal cations per subunit. Magnesium or manganese.</text>
</comment>
<comment type="pathway">
    <text evidence="1">Cofactor biosynthesis; riboflavin biosynthesis; 2-hydroxy-3-oxobutyl phosphate from D-ribulose 5-phosphate: step 1/1.</text>
</comment>
<comment type="subunit">
    <text evidence="1">Homodimer.</text>
</comment>
<comment type="similarity">
    <text evidence="1">Belongs to the DHBP synthase family.</text>
</comment>
<protein>
    <recommendedName>
        <fullName evidence="1">3,4-dihydroxy-2-butanone 4-phosphate synthase</fullName>
        <shortName evidence="1">DHBP synthase</shortName>
        <ecNumber evidence="1">4.1.99.12</ecNumber>
    </recommendedName>
</protein>
<evidence type="ECO:0000255" key="1">
    <source>
        <dbReference type="HAMAP-Rule" id="MF_00180"/>
    </source>
</evidence>